<proteinExistence type="inferred from homology"/>
<dbReference type="EC" id="2.7.1.6" evidence="1"/>
<dbReference type="EMBL" id="CP000308">
    <property type="protein sequence ID" value="ABG13012.1"/>
    <property type="molecule type" value="Genomic_DNA"/>
</dbReference>
<dbReference type="RefSeq" id="WP_002210748.1">
    <property type="nucleotide sequence ID" value="NZ_CP009906.1"/>
</dbReference>
<dbReference type="SMR" id="Q1C960"/>
<dbReference type="GeneID" id="57977277"/>
<dbReference type="KEGG" id="ypa:YPA_1045"/>
<dbReference type="UniPathway" id="UPA00214"/>
<dbReference type="Proteomes" id="UP000001971">
    <property type="component" value="Chromosome"/>
</dbReference>
<dbReference type="GO" id="GO:0005829">
    <property type="term" value="C:cytosol"/>
    <property type="evidence" value="ECO:0007669"/>
    <property type="project" value="TreeGrafter"/>
</dbReference>
<dbReference type="GO" id="GO:0005524">
    <property type="term" value="F:ATP binding"/>
    <property type="evidence" value="ECO:0007669"/>
    <property type="project" value="UniProtKB-UniRule"/>
</dbReference>
<dbReference type="GO" id="GO:0004335">
    <property type="term" value="F:galactokinase activity"/>
    <property type="evidence" value="ECO:0007669"/>
    <property type="project" value="UniProtKB-UniRule"/>
</dbReference>
<dbReference type="GO" id="GO:0000287">
    <property type="term" value="F:magnesium ion binding"/>
    <property type="evidence" value="ECO:0007669"/>
    <property type="project" value="UniProtKB-UniRule"/>
</dbReference>
<dbReference type="GO" id="GO:0006012">
    <property type="term" value="P:galactose metabolic process"/>
    <property type="evidence" value="ECO:0007669"/>
    <property type="project" value="UniProtKB-UniRule"/>
</dbReference>
<dbReference type="FunFam" id="3.30.230.10:FF:000017">
    <property type="entry name" value="Galactokinase"/>
    <property type="match status" value="1"/>
</dbReference>
<dbReference type="FunFam" id="3.30.70.890:FF:000001">
    <property type="entry name" value="Galactokinase"/>
    <property type="match status" value="1"/>
</dbReference>
<dbReference type="Gene3D" id="3.30.230.10">
    <property type="match status" value="1"/>
</dbReference>
<dbReference type="Gene3D" id="3.30.70.890">
    <property type="entry name" value="GHMP kinase, C-terminal domain"/>
    <property type="match status" value="1"/>
</dbReference>
<dbReference type="HAMAP" id="MF_00246">
    <property type="entry name" value="Galactokinase"/>
    <property type="match status" value="1"/>
</dbReference>
<dbReference type="InterPro" id="IPR000705">
    <property type="entry name" value="Galactokinase"/>
</dbReference>
<dbReference type="InterPro" id="IPR022963">
    <property type="entry name" value="Galactokinase_bac"/>
</dbReference>
<dbReference type="InterPro" id="IPR019741">
    <property type="entry name" value="Galactokinase_CS"/>
</dbReference>
<dbReference type="InterPro" id="IPR019539">
    <property type="entry name" value="GalKase_N"/>
</dbReference>
<dbReference type="InterPro" id="IPR013750">
    <property type="entry name" value="GHMP_kinase_C_dom"/>
</dbReference>
<dbReference type="InterPro" id="IPR036554">
    <property type="entry name" value="GHMP_kinase_C_sf"/>
</dbReference>
<dbReference type="InterPro" id="IPR006204">
    <property type="entry name" value="GHMP_kinase_N_dom"/>
</dbReference>
<dbReference type="InterPro" id="IPR006203">
    <property type="entry name" value="GHMP_knse_ATP-bd_CS"/>
</dbReference>
<dbReference type="InterPro" id="IPR006206">
    <property type="entry name" value="Mevalonate/galactokinase"/>
</dbReference>
<dbReference type="InterPro" id="IPR020568">
    <property type="entry name" value="Ribosomal_Su5_D2-typ_SF"/>
</dbReference>
<dbReference type="InterPro" id="IPR014721">
    <property type="entry name" value="Ribsml_uS5_D2-typ_fold_subgr"/>
</dbReference>
<dbReference type="NCBIfam" id="TIGR00131">
    <property type="entry name" value="gal_kin"/>
    <property type="match status" value="1"/>
</dbReference>
<dbReference type="NCBIfam" id="NF003472">
    <property type="entry name" value="PRK05101.1"/>
    <property type="match status" value="1"/>
</dbReference>
<dbReference type="PANTHER" id="PTHR10457:SF7">
    <property type="entry name" value="GALACTOKINASE-RELATED"/>
    <property type="match status" value="1"/>
</dbReference>
<dbReference type="PANTHER" id="PTHR10457">
    <property type="entry name" value="MEVALONATE KINASE/GALACTOKINASE"/>
    <property type="match status" value="1"/>
</dbReference>
<dbReference type="Pfam" id="PF10509">
    <property type="entry name" value="GalKase_gal_bdg"/>
    <property type="match status" value="1"/>
</dbReference>
<dbReference type="Pfam" id="PF08544">
    <property type="entry name" value="GHMP_kinases_C"/>
    <property type="match status" value="1"/>
</dbReference>
<dbReference type="Pfam" id="PF00288">
    <property type="entry name" value="GHMP_kinases_N"/>
    <property type="match status" value="1"/>
</dbReference>
<dbReference type="PIRSF" id="PIRSF000530">
    <property type="entry name" value="Galactokinase"/>
    <property type="match status" value="1"/>
</dbReference>
<dbReference type="PRINTS" id="PR00473">
    <property type="entry name" value="GALCTOKINASE"/>
</dbReference>
<dbReference type="PRINTS" id="PR00959">
    <property type="entry name" value="MEVGALKINASE"/>
</dbReference>
<dbReference type="SUPFAM" id="SSF55060">
    <property type="entry name" value="GHMP Kinase, C-terminal domain"/>
    <property type="match status" value="1"/>
</dbReference>
<dbReference type="SUPFAM" id="SSF54211">
    <property type="entry name" value="Ribosomal protein S5 domain 2-like"/>
    <property type="match status" value="1"/>
</dbReference>
<dbReference type="PROSITE" id="PS00106">
    <property type="entry name" value="GALACTOKINASE"/>
    <property type="match status" value="1"/>
</dbReference>
<dbReference type="PROSITE" id="PS00627">
    <property type="entry name" value="GHMP_KINASES_ATP"/>
    <property type="match status" value="1"/>
</dbReference>
<gene>
    <name evidence="1" type="primary">galK</name>
    <name type="ordered locus">YPA_1045</name>
</gene>
<feature type="chain" id="PRO_1000005772" description="Galactokinase">
    <location>
        <begin position="1"/>
        <end position="383"/>
    </location>
</feature>
<feature type="active site" description="Proton acceptor" evidence="1">
    <location>
        <position position="174"/>
    </location>
</feature>
<feature type="binding site" evidence="1">
    <location>
        <begin position="34"/>
        <end position="37"/>
    </location>
    <ligand>
        <name>substrate</name>
    </ligand>
</feature>
<feature type="binding site" evidence="1">
    <location>
        <begin position="124"/>
        <end position="130"/>
    </location>
    <ligand>
        <name>ATP</name>
        <dbReference type="ChEBI" id="CHEBI:30616"/>
    </ligand>
</feature>
<feature type="binding site" evidence="1">
    <location>
        <position position="130"/>
    </location>
    <ligand>
        <name>Mg(2+)</name>
        <dbReference type="ChEBI" id="CHEBI:18420"/>
    </ligand>
</feature>
<feature type="binding site" evidence="1">
    <location>
        <position position="162"/>
    </location>
    <ligand>
        <name>Mg(2+)</name>
        <dbReference type="ChEBI" id="CHEBI:18420"/>
    </ligand>
</feature>
<feature type="binding site" evidence="1">
    <location>
        <position position="223"/>
    </location>
    <ligand>
        <name>substrate</name>
    </ligand>
</feature>
<feature type="site" description="Transition state stabilizer" evidence="1">
    <location>
        <position position="28"/>
    </location>
</feature>
<protein>
    <recommendedName>
        <fullName evidence="1">Galactokinase</fullName>
        <ecNumber evidence="1">2.7.1.6</ecNumber>
    </recommendedName>
    <alternativeName>
        <fullName evidence="1">Galactose kinase</fullName>
    </alternativeName>
</protein>
<reference key="1">
    <citation type="journal article" date="2006" name="J. Bacteriol.">
        <title>Complete genome sequence of Yersinia pestis strains Antiqua and Nepal516: evidence of gene reduction in an emerging pathogen.</title>
        <authorList>
            <person name="Chain P.S.G."/>
            <person name="Hu P."/>
            <person name="Malfatti S.A."/>
            <person name="Radnedge L."/>
            <person name="Larimer F."/>
            <person name="Vergez L.M."/>
            <person name="Worsham P."/>
            <person name="Chu M.C."/>
            <person name="Andersen G.L."/>
        </authorList>
    </citation>
    <scope>NUCLEOTIDE SEQUENCE [LARGE SCALE GENOMIC DNA]</scope>
    <source>
        <strain>Antiqua</strain>
    </source>
</reference>
<comment type="function">
    <text evidence="1">Catalyzes the transfer of the gamma-phosphate of ATP to D-galactose to form alpha-D-galactose-1-phosphate (Gal-1-P).</text>
</comment>
<comment type="catalytic activity">
    <reaction evidence="1">
        <text>alpha-D-galactose + ATP = alpha-D-galactose 1-phosphate + ADP + H(+)</text>
        <dbReference type="Rhea" id="RHEA:13553"/>
        <dbReference type="ChEBI" id="CHEBI:15378"/>
        <dbReference type="ChEBI" id="CHEBI:28061"/>
        <dbReference type="ChEBI" id="CHEBI:30616"/>
        <dbReference type="ChEBI" id="CHEBI:58336"/>
        <dbReference type="ChEBI" id="CHEBI:456216"/>
        <dbReference type="EC" id="2.7.1.6"/>
    </reaction>
</comment>
<comment type="pathway">
    <text evidence="1">Carbohydrate metabolism; galactose metabolism.</text>
</comment>
<comment type="subcellular location">
    <subcellularLocation>
        <location evidence="1">Cytoplasm</location>
    </subcellularLocation>
</comment>
<comment type="similarity">
    <text evidence="1">Belongs to the GHMP kinase family. GalK subfamily.</text>
</comment>
<name>GAL1_YERPA</name>
<organism>
    <name type="scientific">Yersinia pestis bv. Antiqua (strain Antiqua)</name>
    <dbReference type="NCBI Taxonomy" id="360102"/>
    <lineage>
        <taxon>Bacteria</taxon>
        <taxon>Pseudomonadati</taxon>
        <taxon>Pseudomonadota</taxon>
        <taxon>Gammaproteobacteria</taxon>
        <taxon>Enterobacterales</taxon>
        <taxon>Yersiniaceae</taxon>
        <taxon>Yersinia</taxon>
    </lineage>
</organism>
<evidence type="ECO:0000255" key="1">
    <source>
        <dbReference type="HAMAP-Rule" id="MF_00246"/>
    </source>
</evidence>
<sequence length="383" mass="41866">MSLKQHTQTIFRQQFDRESDITIKAPGRVNLIGEHTDYNDGFVLPCAINYETVISCGKRDDRQIRVIAADYENQQDIFSLDAPIVPHPEYRWADYVRGVVKHLQMRNADFGGADLVICGNVPQGAGLSSSASLEVAVGQALQSLYQLPLSGVELALNGQEAENQFVGCNCGIMDQLISALGKKDHALLIDCRTLETRAVPMPENMAVVIINSNIQRGLVDSEYNTRRQQCEAAARFFGVKALRDVEPSLFFSIQDELDPVVAKRARHVISENARTLAAADALAAGNLKLMGQLMQESHISMRDDFEITVPPIDRLVEIVKSVIGDQGGVRMTGGGFGGCIIALMPLELVEQVRTTVAQEYPAHSGGKKETFYVCQASQGAGLC</sequence>
<accession>Q1C960</accession>
<keyword id="KW-0067">ATP-binding</keyword>
<keyword id="KW-0119">Carbohydrate metabolism</keyword>
<keyword id="KW-0963">Cytoplasm</keyword>
<keyword id="KW-0299">Galactose metabolism</keyword>
<keyword id="KW-0418">Kinase</keyword>
<keyword id="KW-0460">Magnesium</keyword>
<keyword id="KW-0479">Metal-binding</keyword>
<keyword id="KW-0547">Nucleotide-binding</keyword>
<keyword id="KW-0808">Transferase</keyword>